<organism>
    <name type="scientific">Aspergillus oryzae (strain ATCC 42149 / RIB 40)</name>
    <name type="common">Yellow koji mold</name>
    <dbReference type="NCBI Taxonomy" id="510516"/>
    <lineage>
        <taxon>Eukaryota</taxon>
        <taxon>Fungi</taxon>
        <taxon>Dikarya</taxon>
        <taxon>Ascomycota</taxon>
        <taxon>Pezizomycotina</taxon>
        <taxon>Eurotiomycetes</taxon>
        <taxon>Eurotiomycetidae</taxon>
        <taxon>Eurotiales</taxon>
        <taxon>Aspergillaceae</taxon>
        <taxon>Aspergillus</taxon>
        <taxon>Aspergillus subgen. Circumdati</taxon>
    </lineage>
</organism>
<gene>
    <name evidence="3" type="primary">aoiF</name>
    <name type="ORF">AO090010000047</name>
</gene>
<proteinExistence type="evidence at protein level"/>
<protein>
    <recommendedName>
        <fullName evidence="3">O-methyltransferase aoiF</fullName>
        <ecNumber evidence="2">2.1.1.-</ecNumber>
    </recommendedName>
</protein>
<feature type="chain" id="PRO_0000462122" description="O-methyltransferase aoiF">
    <location>
        <begin position="1"/>
        <end position="423"/>
    </location>
</feature>
<feature type="active site" description="Proton acceptor" evidence="1">
    <location>
        <position position="324"/>
    </location>
</feature>
<feature type="binding site" evidence="1">
    <location>
        <position position="273"/>
    </location>
    <ligand>
        <name>S-adenosyl-L-methionine</name>
        <dbReference type="ChEBI" id="CHEBI:59789"/>
    </ligand>
</feature>
<sequence length="423" mass="47320">MEELTRSLVNDVEVLNNHFVSTGHPLPSFDRHTPTVVLPNDASPDAHAARERILDNALRLFQLAAGPSAYLLNLQTGYQYASCVRWLCHFQIFHLVPLEGSIAYADLAVLAKAPEPQLISVVRMAMTNGLFLESPPQHLAHSATSALLRNDADFHDWAVTMSDLSFPTAFAMVEAHERWPNSVEGNQTAYNIAVGSELPFFSHLAEQSDRKRQFAGFMRSMARSQGTDVEKLAEGWDWAALGQACVVDVGGSTGHTSVALARKYPDLNFVVEDLPEVVAEGPGYLSYLDDAQDLKSRIGYRAHSFFDPQPVQDADVYMLRMILHNWSFDDCVRILSRLVQTLKPGARIIIVDIVLPDPGVVSASKERLLRVQDLIMQQVFNSMERYLENWMDIFRKVDERLEVKRIVEPPGSLMSLIELSMAA</sequence>
<keyword id="KW-0489">Methyltransferase</keyword>
<keyword id="KW-1185">Reference proteome</keyword>
<keyword id="KW-0949">S-adenosyl-L-methionine</keyword>
<keyword id="KW-0808">Transferase</keyword>
<evidence type="ECO:0000255" key="1">
    <source>
        <dbReference type="PROSITE-ProRule" id="PRU01020"/>
    </source>
</evidence>
<evidence type="ECO:0000269" key="2">
    <source>
    </source>
</evidence>
<evidence type="ECO:0000303" key="3">
    <source>
    </source>
</evidence>
<comment type="function">
    <text evidence="2">O-methyltransferase; part of the gene cluster that mediates the biosynthesis of a methylated derivative of known natural products orthosporin and diaporthin (PubMed:22447538). Within the pathway, aoiF catalyzes the biotransformation of orthosporin to diaporthin but also of diaporthin to the final product, by performing a tandem methylation of the polyketide core (PubMed:22447538). Orthosporin is produced by an oxidoreductase that has still to be identified and that catalyzes the stereospecific reduction of the carbonyl moiety of the hexaketide isocoumarin scaffold produced by the non-reducing polyketide synthase aoiG to generate the S-configured secondary alcohol at C-11 (PubMed:22447538).</text>
</comment>
<comment type="pathway">
    <text evidence="2">Secondary metabolite biosynthesis.</text>
</comment>
<comment type="induction">
    <text evidence="2">Expression is positively regulated by the cluster-specific transcription factor aoiH.</text>
</comment>
<comment type="similarity">
    <text evidence="1">Belongs to the class I-like SAM-binding methyltransferase superfamily. Cation-independent O-methyltransferase family.</text>
</comment>
<name>AOIF_ASPOR</name>
<accession>Q2TXQ9</accession>
<dbReference type="EC" id="2.1.1.-" evidence="2"/>
<dbReference type="EMBL" id="AP007175">
    <property type="protein sequence ID" value="BAE65964.1"/>
    <property type="molecule type" value="Genomic_DNA"/>
</dbReference>
<dbReference type="RefSeq" id="XP_001827097.1">
    <property type="nucleotide sequence ID" value="XM_001827045.1"/>
</dbReference>
<dbReference type="STRING" id="510516.Q2TXQ9"/>
<dbReference type="EnsemblFungi" id="BAE65964">
    <property type="protein sequence ID" value="BAE65964"/>
    <property type="gene ID" value="AO090010000047"/>
</dbReference>
<dbReference type="GeneID" id="5999231"/>
<dbReference type="KEGG" id="aor:AO090010000047"/>
<dbReference type="VEuPathDB" id="FungiDB:AO090010000047"/>
<dbReference type="HOGENOM" id="CLU_005533_1_4_1"/>
<dbReference type="OMA" id="CEPEPNM"/>
<dbReference type="OrthoDB" id="387446at2759"/>
<dbReference type="Proteomes" id="UP000006564">
    <property type="component" value="Chromosome 8"/>
</dbReference>
<dbReference type="GO" id="GO:0008171">
    <property type="term" value="F:O-methyltransferase activity"/>
    <property type="evidence" value="ECO:0007669"/>
    <property type="project" value="InterPro"/>
</dbReference>
<dbReference type="GO" id="GO:0032259">
    <property type="term" value="P:methylation"/>
    <property type="evidence" value="ECO:0007669"/>
    <property type="project" value="UniProtKB-KW"/>
</dbReference>
<dbReference type="GO" id="GO:0030639">
    <property type="term" value="P:polyketide biosynthetic process"/>
    <property type="evidence" value="ECO:0000317"/>
    <property type="project" value="AspGD"/>
</dbReference>
<dbReference type="CDD" id="cd02440">
    <property type="entry name" value="AdoMet_MTases"/>
    <property type="match status" value="1"/>
</dbReference>
<dbReference type="FunFam" id="1.10.10.10:FF:000944">
    <property type="entry name" value="O-methyltransferase"/>
    <property type="match status" value="1"/>
</dbReference>
<dbReference type="FunFam" id="3.40.50.150:FF:000597">
    <property type="entry name" value="O-methyltransferase"/>
    <property type="match status" value="1"/>
</dbReference>
<dbReference type="Gene3D" id="3.40.50.150">
    <property type="entry name" value="Vaccinia Virus protein VP39"/>
    <property type="match status" value="1"/>
</dbReference>
<dbReference type="Gene3D" id="1.10.10.10">
    <property type="entry name" value="Winged helix-like DNA-binding domain superfamily/Winged helix DNA-binding domain"/>
    <property type="match status" value="1"/>
</dbReference>
<dbReference type="InterPro" id="IPR016461">
    <property type="entry name" value="COMT-like"/>
</dbReference>
<dbReference type="InterPro" id="IPR001077">
    <property type="entry name" value="O_MeTrfase_dom"/>
</dbReference>
<dbReference type="InterPro" id="IPR029063">
    <property type="entry name" value="SAM-dependent_MTases_sf"/>
</dbReference>
<dbReference type="InterPro" id="IPR036388">
    <property type="entry name" value="WH-like_DNA-bd_sf"/>
</dbReference>
<dbReference type="InterPro" id="IPR036390">
    <property type="entry name" value="WH_DNA-bd_sf"/>
</dbReference>
<dbReference type="PANTHER" id="PTHR43712:SF19">
    <property type="entry name" value="DUAL O-METHYLTRANSFERASE_FAD-DEPENDENT MONOOXYGENASE ELCB"/>
    <property type="match status" value="1"/>
</dbReference>
<dbReference type="PANTHER" id="PTHR43712">
    <property type="entry name" value="PUTATIVE (AFU_ORTHOLOGUE AFUA_4G14580)-RELATED"/>
    <property type="match status" value="1"/>
</dbReference>
<dbReference type="Pfam" id="PF00891">
    <property type="entry name" value="Methyltransf_2"/>
    <property type="match status" value="1"/>
</dbReference>
<dbReference type="SUPFAM" id="SSF53335">
    <property type="entry name" value="S-adenosyl-L-methionine-dependent methyltransferases"/>
    <property type="match status" value="1"/>
</dbReference>
<dbReference type="SUPFAM" id="SSF46785">
    <property type="entry name" value="Winged helix' DNA-binding domain"/>
    <property type="match status" value="1"/>
</dbReference>
<dbReference type="PROSITE" id="PS51683">
    <property type="entry name" value="SAM_OMT_II"/>
    <property type="match status" value="1"/>
</dbReference>
<reference key="1">
    <citation type="journal article" date="2005" name="Nature">
        <title>Genome sequencing and analysis of Aspergillus oryzae.</title>
        <authorList>
            <person name="Machida M."/>
            <person name="Asai K."/>
            <person name="Sano M."/>
            <person name="Tanaka T."/>
            <person name="Kumagai T."/>
            <person name="Terai G."/>
            <person name="Kusumoto K."/>
            <person name="Arima T."/>
            <person name="Akita O."/>
            <person name="Kashiwagi Y."/>
            <person name="Abe K."/>
            <person name="Gomi K."/>
            <person name="Horiuchi H."/>
            <person name="Kitamoto K."/>
            <person name="Kobayashi T."/>
            <person name="Takeuchi M."/>
            <person name="Denning D.W."/>
            <person name="Galagan J.E."/>
            <person name="Nierman W.C."/>
            <person name="Yu J."/>
            <person name="Archer D.B."/>
            <person name="Bennett J.W."/>
            <person name="Bhatnagar D."/>
            <person name="Cleveland T.E."/>
            <person name="Fedorova N.D."/>
            <person name="Gotoh O."/>
            <person name="Horikawa H."/>
            <person name="Hosoyama A."/>
            <person name="Ichinomiya M."/>
            <person name="Igarashi R."/>
            <person name="Iwashita K."/>
            <person name="Juvvadi P.R."/>
            <person name="Kato M."/>
            <person name="Kato Y."/>
            <person name="Kin T."/>
            <person name="Kokubun A."/>
            <person name="Maeda H."/>
            <person name="Maeyama N."/>
            <person name="Maruyama J."/>
            <person name="Nagasaki H."/>
            <person name="Nakajima T."/>
            <person name="Oda K."/>
            <person name="Okada K."/>
            <person name="Paulsen I."/>
            <person name="Sakamoto K."/>
            <person name="Sawano T."/>
            <person name="Takahashi M."/>
            <person name="Takase K."/>
            <person name="Terabayashi Y."/>
            <person name="Wortman J.R."/>
            <person name="Yamada O."/>
            <person name="Yamagata Y."/>
            <person name="Anazawa H."/>
            <person name="Hata Y."/>
            <person name="Koide Y."/>
            <person name="Komori T."/>
            <person name="Koyama Y."/>
            <person name="Minetoki T."/>
            <person name="Suharnan S."/>
            <person name="Tanaka A."/>
            <person name="Isono K."/>
            <person name="Kuhara S."/>
            <person name="Ogasawara N."/>
            <person name="Kikuchi H."/>
        </authorList>
    </citation>
    <scope>NUCLEOTIDE SEQUENCE [LARGE SCALE GENOMIC DNA]</scope>
    <source>
        <strain>ATCC 42149 / RIB 40</strain>
    </source>
</reference>
<reference key="2">
    <citation type="journal article" date="2012" name="ChemBioChem">
        <title>Overexpressing transcriptional regulator in Aspergillus oryzae activates a silent biosynthetic pathway to produce a novel polyketide.</title>
        <authorList>
            <person name="Nakazawa T."/>
            <person name="Ishiuchi K."/>
            <person name="Praseuth A."/>
            <person name="Noguchi H."/>
            <person name="Hotta K."/>
            <person name="Watanabe K."/>
        </authorList>
    </citation>
    <scope>FUNCTION</scope>
    <scope>CATALYTIC ACTIVITY</scope>
    <scope>PATHWAY</scope>
    <scope>INDUCTION</scope>
</reference>